<comment type="function">
    <text evidence="2">May help in the organization of the PsaE and PsaF subunits.</text>
</comment>
<comment type="subcellular location">
    <subcellularLocation>
        <location evidence="1">Plastid membrane</location>
        <topology evidence="2">Single-pass membrane protein</topology>
    </subcellularLocation>
</comment>
<comment type="similarity">
    <text evidence="2">Belongs to the PsaJ family.</text>
</comment>
<comment type="caution">
    <text evidence="3">Only inflorescences, fruits, starved seedlings and stressed stem tips are green in this organism.</text>
</comment>
<sequence length="44" mass="5072">MRDFKTYLSVAPVLSTLSLGFFAGFLIEINRFFPDALTFPFFSF</sequence>
<protein>
    <recommendedName>
        <fullName evidence="2">Photosystem I reaction center subunit IX</fullName>
    </recommendedName>
    <alternativeName>
        <fullName evidence="2">PSI-J</fullName>
    </alternativeName>
</protein>
<gene>
    <name evidence="2" type="primary">psaJ</name>
</gene>
<organism>
    <name type="scientific">Cuscuta obtusiflora</name>
    <name type="common">Peruvian dodder</name>
    <dbReference type="NCBI Taxonomy" id="437280"/>
    <lineage>
        <taxon>Eukaryota</taxon>
        <taxon>Viridiplantae</taxon>
        <taxon>Streptophyta</taxon>
        <taxon>Embryophyta</taxon>
        <taxon>Tracheophyta</taxon>
        <taxon>Spermatophyta</taxon>
        <taxon>Magnoliopsida</taxon>
        <taxon>eudicotyledons</taxon>
        <taxon>Gunneridae</taxon>
        <taxon>Pentapetalae</taxon>
        <taxon>asterids</taxon>
        <taxon>lamiids</taxon>
        <taxon>Solanales</taxon>
        <taxon>Convolvulaceae</taxon>
        <taxon>Cuscuteae</taxon>
        <taxon>Cuscuta</taxon>
        <taxon>Cuscuta subgen. Grammica</taxon>
        <taxon>Cuscuta sect. Cleistogrammica</taxon>
    </lineage>
</organism>
<reference key="1">
    <citation type="journal article" date="2007" name="BMC Plant Biol.">
        <title>Complete plastid genome sequences suggest strong selection for retention of photosynthetic genes in the parasitic plant genus Cuscuta.</title>
        <authorList>
            <person name="McNeal J.R."/>
            <person name="Kuehl J.V."/>
            <person name="Boore J.L."/>
            <person name="dePamphilis C.W."/>
        </authorList>
    </citation>
    <scope>NUCLEOTIDE SEQUENCE [LARGE SCALE GENOMIC DNA]</scope>
</reference>
<proteinExistence type="inferred from homology"/>
<dbReference type="EMBL" id="EU189133">
    <property type="protein sequence ID" value="ABW20578.1"/>
    <property type="molecule type" value="Genomic_DNA"/>
</dbReference>
<dbReference type="RefSeq" id="YP_001531233.1">
    <property type="nucleotide sequence ID" value="NC_009949.1"/>
</dbReference>
<dbReference type="SMR" id="A8W3K3"/>
<dbReference type="GeneID" id="5714818"/>
<dbReference type="GO" id="GO:0009522">
    <property type="term" value="C:photosystem I"/>
    <property type="evidence" value="ECO:0007669"/>
    <property type="project" value="UniProtKB-KW"/>
</dbReference>
<dbReference type="GO" id="GO:0042170">
    <property type="term" value="C:plastid membrane"/>
    <property type="evidence" value="ECO:0007669"/>
    <property type="project" value="UniProtKB-SubCell"/>
</dbReference>
<dbReference type="GO" id="GO:0042651">
    <property type="term" value="C:thylakoid membrane"/>
    <property type="evidence" value="ECO:0007669"/>
    <property type="project" value="UniProtKB-UniRule"/>
</dbReference>
<dbReference type="GO" id="GO:0015979">
    <property type="term" value="P:photosynthesis"/>
    <property type="evidence" value="ECO:0007669"/>
    <property type="project" value="UniProtKB-UniRule"/>
</dbReference>
<dbReference type="Gene3D" id="1.20.5.510">
    <property type="entry name" value="Single helix bin"/>
    <property type="match status" value="1"/>
</dbReference>
<dbReference type="HAMAP" id="MF_00522">
    <property type="entry name" value="PSI_PsaJ"/>
    <property type="match status" value="1"/>
</dbReference>
<dbReference type="InterPro" id="IPR002615">
    <property type="entry name" value="PSI_PsaJ"/>
</dbReference>
<dbReference type="InterPro" id="IPR036062">
    <property type="entry name" value="PSI_PsaJ_sf"/>
</dbReference>
<dbReference type="PANTHER" id="PTHR36082">
    <property type="match status" value="1"/>
</dbReference>
<dbReference type="PANTHER" id="PTHR36082:SF2">
    <property type="entry name" value="PHOTOSYSTEM I REACTION CENTER SUBUNIT IX"/>
    <property type="match status" value="1"/>
</dbReference>
<dbReference type="Pfam" id="PF01701">
    <property type="entry name" value="PSI_PsaJ"/>
    <property type="match status" value="1"/>
</dbReference>
<dbReference type="SUPFAM" id="SSF81544">
    <property type="entry name" value="Subunit IX of photosystem I reaction centre, PsaJ"/>
    <property type="match status" value="1"/>
</dbReference>
<evidence type="ECO:0000250" key="1"/>
<evidence type="ECO:0000255" key="2">
    <source>
        <dbReference type="HAMAP-Rule" id="MF_00522"/>
    </source>
</evidence>
<evidence type="ECO:0000305" key="3"/>
<keyword id="KW-0472">Membrane</keyword>
<keyword id="KW-0602">Photosynthesis</keyword>
<keyword id="KW-0603">Photosystem I</keyword>
<keyword id="KW-0934">Plastid</keyword>
<keyword id="KW-0812">Transmembrane</keyword>
<keyword id="KW-1133">Transmembrane helix</keyword>
<geneLocation type="plastid"/>
<feature type="chain" id="PRO_0000354142" description="Photosystem I reaction center subunit IX">
    <location>
        <begin position="1"/>
        <end position="44"/>
    </location>
</feature>
<feature type="transmembrane region" description="Helical" evidence="2">
    <location>
        <begin position="7"/>
        <end position="27"/>
    </location>
</feature>
<name>PSAJ_CUSOB</name>
<accession>A8W3K3</accession>